<evidence type="ECO:0000250" key="1">
    <source>
        <dbReference type="UniProtKB" id="P46673"/>
    </source>
</evidence>
<evidence type="ECO:0000255" key="2"/>
<evidence type="ECO:0000256" key="3">
    <source>
        <dbReference type="SAM" id="MobiDB-lite"/>
    </source>
</evidence>
<evidence type="ECO:0000303" key="4">
    <source>
    </source>
</evidence>
<evidence type="ECO:0000305" key="5"/>
<evidence type="ECO:0000305" key="6">
    <source>
    </source>
</evidence>
<comment type="function">
    <text evidence="1">Functions as a component of the nuclear pore complex (NPC). NPC components, collectively referred to as nucleoporins (NUPs), can play the role of both NPC structural components and of docking or interaction partners for transiently associated nuclear transport factors. NUP85 is involved in nuclear poly(A)+ RNA and pre-ribosome export, in GSP1 nuclear import, in NPC assembly and distribution, as well as in nuclear envelope organization.</text>
</comment>
<comment type="subunit">
    <text evidence="1 6">Component of the nuclear pore complex (NPC). NPC constitutes the exclusive means of nucleocytoplasmic transport. NPCs allow the passive diffusion of ions and small molecules and the active, nuclear transport receptor-mediated bidirectional transport of macromolecules such as proteins, RNAs, ribonucleoparticles (RNPs), and ribosomal subunits across the nuclear envelope. Due to its 8-fold rotational symmetry, all subunits are present with 8 copies or multiples thereof.</text>
</comment>
<comment type="interaction">
    <interactant intactId="EBI-16069259">
        <id>G0SDQ4</id>
    </interactant>
    <interactant intactId="EBI-16069391">
        <id>G0S2G1</id>
        <label>ELYS</label>
    </interactant>
    <organismsDiffer>false</organismsDiffer>
    <experiments>7</experiments>
</comment>
<comment type="interaction">
    <interactant intactId="EBI-16069259">
        <id>G0SDQ4</id>
    </interactant>
    <interactant intactId="EBI-16069242">
        <id>G0S0E7</id>
        <label>NUP120</label>
    </interactant>
    <organismsDiffer>false</organismsDiffer>
    <experiments>15</experiments>
</comment>
<comment type="interaction">
    <interactant intactId="EBI-16069259">
        <id>G0SDQ4</id>
    </interactant>
    <interactant intactId="EBI-16069276">
        <id>G0SAK3</id>
        <label>NUP145</label>
    </interactant>
    <organismsDiffer>false</organismsDiffer>
    <experiments>7</experiments>
</comment>
<comment type="subcellular location">
    <subcellularLocation>
        <location evidence="1">Nucleus</location>
        <location evidence="1">Nuclear pore complex</location>
    </subcellularLocation>
    <subcellularLocation>
        <location evidence="1">Nucleus membrane</location>
        <topology evidence="1">Peripheral membrane protein</topology>
        <orientation evidence="1">Cytoplasmic side</orientation>
    </subcellularLocation>
    <subcellularLocation>
        <location evidence="1">Nucleus membrane</location>
        <topology evidence="1">Peripheral membrane protein</topology>
        <orientation evidence="1">Nucleoplasmic side</orientation>
    </subcellularLocation>
    <text evidence="1">Symmetric distribution.</text>
</comment>
<comment type="similarity">
    <text evidence="5">Belongs to the nucleoporin Nup85 family.</text>
</comment>
<keyword id="KW-0472">Membrane</keyword>
<keyword id="KW-0509">mRNA transport</keyword>
<keyword id="KW-0906">Nuclear pore complex</keyword>
<keyword id="KW-0539">Nucleus</keyword>
<keyword id="KW-0653">Protein transport</keyword>
<keyword id="KW-1185">Reference proteome</keyword>
<keyword id="KW-0811">Translocation</keyword>
<keyword id="KW-0813">Transport</keyword>
<sequence>MFRVPDDSILSSSPAPSTPDKSRRAGSSNLFRDSTASSAASTTPAGTPPVKFLGSSIMRPSDKNASSSVDDDQPAVGLFTGIGGGVGVGMGAGTGATAAAKAAKKNLFAAVSGERRRNVPLGRSGRGHDSRQPSRLRKSIGVDDLEDEEEEEEKKKKPQLLKPKGKVQEKKKDEPVRGLFTGTSLAPPPLSKAAAAATTTTTTGPTKSFGLTYEEFGESEEEDSGLTGGQDAEGELDDSMWLERSPERPAIGDESDLLLMATPAATERVRREAEDIFRATAMGAGATTRRHEYRYASLAKDVYTQLGTAPLVEPPQLILSTEALLEQLYDEGVGTHDDDARLDETLAAVAVQLINLWQDHVDAIAQPEEDGHVADIGPGPRASPFEKAYWLATLALQLHHTRALDGGVEPLPATLFQWLNDRHDMYAGQVEEILRYRPSPACHSLFWQAVFMSLLRGRVKDATQLLRRAGWEHVRRGGQQRGEYAYSDRALENVLRVVDETVSVLESCPGYDGNWEIWSSEWTLFRVRAQGALEHLRRFAEGKDTSFGDSLFGSSTGSNRGYTGYRDHTLAGLARRAESQVPWDVYESLNVVFDIVLGQQASILEAAQDWLEATIGLFGWWDERNNNNNNNNNNNNNNNGYQKPGRTQALVLHSSPAHHINNDSESYLDRLARAFHAAVASDFHFNSQNPVEIGMACIFEDNIKGVIGLLRSWSLPIAAAVAQVASLGRWLPPHRPKGMYALEDLDMDDLEVLGVDPGAPDEVDGVKDSTLVQYAQALVEYEGLETVRDRAGVYREGWELAISVLGRMDSPERSEEMVRDIVEHLVQGLTVDSTETVDRLWTMLNELSMITYAEEMTETFGDILARESHRYGEAMWYYALAHRPNKVREVMNLLISYSLIQSTAFPPAADLDDYLHRLLSDRKHTLEQYAKQDMEAAELLGKMLSGYAALRQFYDIRDNVDATSISPVSRRQQAAAALISVIASSDDNIRGGLVDQTRDGIVSEDFLLALLGEALVFVSNPDNTFVHHGHAAVPILSQDQIDVLLKAVEDLTAVSERVYNVCDEFLQLVLASAPGGALKGSKPADLLKKGQDGQQMVLAGSSLIASQLQKSLLGGSGSALGKVPVKRGWDWREGMPAKMKGEDVIRRLRLGLAKDLARLWLAEADALVW</sequence>
<proteinExistence type="evidence at protein level"/>
<reference key="1">
    <citation type="journal article" date="2011" name="Cell">
        <title>Insight into structure and assembly of the nuclear pore complex by utilizing the genome of a eukaryotic thermophile.</title>
        <authorList>
            <person name="Amlacher S."/>
            <person name="Sarges P."/>
            <person name="Flemming D."/>
            <person name="van Noort V."/>
            <person name="Kunze R."/>
            <person name="Devos D.P."/>
            <person name="Arumugam M."/>
            <person name="Bork P."/>
            <person name="Hurt E."/>
        </authorList>
    </citation>
    <scope>NUCLEOTIDE SEQUENCE [LARGE SCALE GENOMIC DNA]</scope>
    <source>
        <strain>DSM 1495 / CBS 144.50 / IMI 039719</strain>
    </source>
</reference>
<gene>
    <name type="primary">NUP85</name>
    <name type="ORF">CTHT_0052610</name>
</gene>
<dbReference type="EMBL" id="GL988045">
    <property type="protein sequence ID" value="EGS18655.1"/>
    <property type="molecule type" value="Genomic_DNA"/>
</dbReference>
<dbReference type="EMBL" id="JF276291">
    <property type="protein sequence ID" value="AEL00686.1"/>
    <property type="molecule type" value="Genomic_DNA"/>
</dbReference>
<dbReference type="RefSeq" id="XP_006695600.1">
    <property type="nucleotide sequence ID" value="XM_006695537.1"/>
</dbReference>
<dbReference type="SMR" id="G0SDQ4"/>
<dbReference type="DIP" id="DIP-60570N"/>
<dbReference type="IntAct" id="G0SDQ4">
    <property type="interactions" value="7"/>
</dbReference>
<dbReference type="STRING" id="759272.G0SDQ4"/>
<dbReference type="TCDB" id="1.I.1.1.2">
    <property type="family name" value="the nuclear pore complex (npc) family"/>
</dbReference>
<dbReference type="GeneID" id="18259299"/>
<dbReference type="KEGG" id="cthr:CTHT_0052610"/>
<dbReference type="eggNOG" id="ENOG502SIA5">
    <property type="taxonomic scope" value="Eukaryota"/>
</dbReference>
<dbReference type="HOGENOM" id="CLU_002336_1_0_1"/>
<dbReference type="OMA" id="YKPSPAC"/>
<dbReference type="OrthoDB" id="5422384at2759"/>
<dbReference type="Proteomes" id="UP000008066">
    <property type="component" value="Unassembled WGS sequence"/>
</dbReference>
<dbReference type="GO" id="GO:0031965">
    <property type="term" value="C:nuclear membrane"/>
    <property type="evidence" value="ECO:0007669"/>
    <property type="project" value="UniProtKB-SubCell"/>
</dbReference>
<dbReference type="GO" id="GO:0031080">
    <property type="term" value="C:nuclear pore outer ring"/>
    <property type="evidence" value="ECO:0007669"/>
    <property type="project" value="TreeGrafter"/>
</dbReference>
<dbReference type="GO" id="GO:0017056">
    <property type="term" value="F:structural constituent of nuclear pore"/>
    <property type="evidence" value="ECO:0007669"/>
    <property type="project" value="TreeGrafter"/>
</dbReference>
<dbReference type="GO" id="GO:0006406">
    <property type="term" value="P:mRNA export from nucleus"/>
    <property type="evidence" value="ECO:0007669"/>
    <property type="project" value="TreeGrafter"/>
</dbReference>
<dbReference type="GO" id="GO:0045893">
    <property type="term" value="P:positive regulation of DNA-templated transcription"/>
    <property type="evidence" value="ECO:0007669"/>
    <property type="project" value="TreeGrafter"/>
</dbReference>
<dbReference type="GO" id="GO:0006606">
    <property type="term" value="P:protein import into nucleus"/>
    <property type="evidence" value="ECO:0007669"/>
    <property type="project" value="TreeGrafter"/>
</dbReference>
<dbReference type="InterPro" id="IPR011502">
    <property type="entry name" value="Nucleoporin_Nup85"/>
</dbReference>
<dbReference type="PANTHER" id="PTHR13373">
    <property type="entry name" value="FROUNT PROTEIN-RELATED"/>
    <property type="match status" value="1"/>
</dbReference>
<dbReference type="PANTHER" id="PTHR13373:SF21">
    <property type="entry name" value="NUCLEAR PORE COMPLEX PROTEIN NUP85"/>
    <property type="match status" value="1"/>
</dbReference>
<dbReference type="Pfam" id="PF07575">
    <property type="entry name" value="Nucleopor_Nup85"/>
    <property type="match status" value="1"/>
</dbReference>
<organism>
    <name type="scientific">Chaetomium thermophilum (strain DSM 1495 / CBS 144.50 / IMI 039719)</name>
    <name type="common">Thermochaetoides thermophila</name>
    <dbReference type="NCBI Taxonomy" id="759272"/>
    <lineage>
        <taxon>Eukaryota</taxon>
        <taxon>Fungi</taxon>
        <taxon>Dikarya</taxon>
        <taxon>Ascomycota</taxon>
        <taxon>Pezizomycotina</taxon>
        <taxon>Sordariomycetes</taxon>
        <taxon>Sordariomycetidae</taxon>
        <taxon>Sordariales</taxon>
        <taxon>Chaetomiaceae</taxon>
        <taxon>Thermochaetoides</taxon>
    </lineage>
</organism>
<name>NUP85_CHATD</name>
<accession>G0SDQ4</accession>
<accession>G0ZGU8</accession>
<feature type="chain" id="PRO_0000433178" description="Nucleoporin NUP85">
    <location>
        <begin position="1"/>
        <end position="1169"/>
    </location>
</feature>
<feature type="region of interest" description="Disordered" evidence="3">
    <location>
        <begin position="1"/>
        <end position="210"/>
    </location>
</feature>
<feature type="short sequence motif" description="Bipartite nuclear localization signal" evidence="2">
    <location>
        <begin position="103"/>
        <end position="110"/>
    </location>
</feature>
<feature type="short sequence motif" description="Bipartite nuclear localization signal" evidence="2">
    <location>
        <begin position="155"/>
        <end position="162"/>
    </location>
</feature>
<feature type="compositionally biased region" description="Low complexity" evidence="3">
    <location>
        <begin position="34"/>
        <end position="49"/>
    </location>
</feature>
<feature type="compositionally biased region" description="Gly residues" evidence="3">
    <location>
        <begin position="80"/>
        <end position="94"/>
    </location>
</feature>
<feature type="compositionally biased region" description="Low complexity" evidence="3">
    <location>
        <begin position="95"/>
        <end position="110"/>
    </location>
</feature>
<feature type="compositionally biased region" description="Acidic residues" evidence="3">
    <location>
        <begin position="143"/>
        <end position="152"/>
    </location>
</feature>
<feature type="compositionally biased region" description="Basic residues" evidence="3">
    <location>
        <begin position="156"/>
        <end position="165"/>
    </location>
</feature>
<feature type="compositionally biased region" description="Basic and acidic residues" evidence="3">
    <location>
        <begin position="166"/>
        <end position="176"/>
    </location>
</feature>
<feature type="compositionally biased region" description="Low complexity" evidence="3">
    <location>
        <begin position="191"/>
        <end position="210"/>
    </location>
</feature>
<protein>
    <recommendedName>
        <fullName evidence="4">Nucleoporin NUP85</fullName>
    </recommendedName>
    <alternativeName>
        <fullName>Nuclear pore protein NUP85</fullName>
    </alternativeName>
</protein>